<sequence length="258" mass="28309">MILVLDVGNTNIVLGIYKNKELIANWRLATDNKRTADEYGIQVIELFSHNNLSFSDIEGVIISSVVPNIMYSLEHMISKYFNIKPIIVGPGVKTGINIKYDNPKEVGADRIVNAVAAHEIYKKPLIIIDFGTATTFCAVTKEANYLGGTICPGIKISSDALFDKAAKLPRVELVKTPGVICKNTVASIQSGIIYGYAGQVDYIVSKMKKEMMDLGEEEPFVVATGGFAKLISEESKSIDEINAILTLEGLRVIYEKNK</sequence>
<reference key="1">
    <citation type="submission" date="2008-05" db="EMBL/GenBank/DDBJ databases">
        <title>Genome sequence of Clostridium botulinum Ba4 strain 657.</title>
        <authorList>
            <person name="Shrivastava S."/>
            <person name="Brown J.L."/>
            <person name="Bruce D."/>
            <person name="Detter C."/>
            <person name="Munk C."/>
            <person name="Smith L.A."/>
            <person name="Smith T.J."/>
            <person name="Sutton G."/>
            <person name="Brettin T.S."/>
        </authorList>
    </citation>
    <scope>NUCLEOTIDE SEQUENCE [LARGE SCALE GENOMIC DNA]</scope>
    <source>
        <strain>657 / Type Ba4</strain>
    </source>
</reference>
<protein>
    <recommendedName>
        <fullName evidence="1">Type III pantothenate kinase</fullName>
        <ecNumber evidence="1">2.7.1.33</ecNumber>
    </recommendedName>
    <alternativeName>
        <fullName evidence="1">PanK-III</fullName>
    </alternativeName>
    <alternativeName>
        <fullName evidence="1">Pantothenic acid kinase</fullName>
    </alternativeName>
</protein>
<evidence type="ECO:0000255" key="1">
    <source>
        <dbReference type="HAMAP-Rule" id="MF_01274"/>
    </source>
</evidence>
<dbReference type="EC" id="2.7.1.33" evidence="1"/>
<dbReference type="EMBL" id="CP001083">
    <property type="protein sequence ID" value="ACQ54135.1"/>
    <property type="molecule type" value="Genomic_DNA"/>
</dbReference>
<dbReference type="RefSeq" id="WP_003359441.1">
    <property type="nucleotide sequence ID" value="NC_012658.1"/>
</dbReference>
<dbReference type="SMR" id="C3KVU3"/>
<dbReference type="KEGG" id="cbi:CLJ_B3846"/>
<dbReference type="HOGENOM" id="CLU_066627_1_0_9"/>
<dbReference type="UniPathway" id="UPA00241">
    <property type="reaction ID" value="UER00352"/>
</dbReference>
<dbReference type="Proteomes" id="UP000002333">
    <property type="component" value="Chromosome"/>
</dbReference>
<dbReference type="GO" id="GO:0005737">
    <property type="term" value="C:cytoplasm"/>
    <property type="evidence" value="ECO:0007669"/>
    <property type="project" value="UniProtKB-SubCell"/>
</dbReference>
<dbReference type="GO" id="GO:0005524">
    <property type="term" value="F:ATP binding"/>
    <property type="evidence" value="ECO:0007669"/>
    <property type="project" value="UniProtKB-UniRule"/>
</dbReference>
<dbReference type="GO" id="GO:0046872">
    <property type="term" value="F:metal ion binding"/>
    <property type="evidence" value="ECO:0007669"/>
    <property type="project" value="UniProtKB-KW"/>
</dbReference>
<dbReference type="GO" id="GO:0004594">
    <property type="term" value="F:pantothenate kinase activity"/>
    <property type="evidence" value="ECO:0007669"/>
    <property type="project" value="UniProtKB-UniRule"/>
</dbReference>
<dbReference type="GO" id="GO:0015937">
    <property type="term" value="P:coenzyme A biosynthetic process"/>
    <property type="evidence" value="ECO:0007669"/>
    <property type="project" value="UniProtKB-UniRule"/>
</dbReference>
<dbReference type="CDD" id="cd24015">
    <property type="entry name" value="ASKHA_NBD_PanK-III"/>
    <property type="match status" value="1"/>
</dbReference>
<dbReference type="Gene3D" id="3.30.420.40">
    <property type="match status" value="2"/>
</dbReference>
<dbReference type="HAMAP" id="MF_01274">
    <property type="entry name" value="Pantothen_kinase_3"/>
    <property type="match status" value="1"/>
</dbReference>
<dbReference type="InterPro" id="IPR043129">
    <property type="entry name" value="ATPase_NBD"/>
</dbReference>
<dbReference type="InterPro" id="IPR004619">
    <property type="entry name" value="Type_III_PanK"/>
</dbReference>
<dbReference type="NCBIfam" id="TIGR00671">
    <property type="entry name" value="baf"/>
    <property type="match status" value="1"/>
</dbReference>
<dbReference type="NCBIfam" id="NF009847">
    <property type="entry name" value="PRK13318.1-5"/>
    <property type="match status" value="1"/>
</dbReference>
<dbReference type="NCBIfam" id="NF009848">
    <property type="entry name" value="PRK13318.1-6"/>
    <property type="match status" value="1"/>
</dbReference>
<dbReference type="NCBIfam" id="NF009855">
    <property type="entry name" value="PRK13321.1"/>
    <property type="match status" value="1"/>
</dbReference>
<dbReference type="PANTHER" id="PTHR34265">
    <property type="entry name" value="TYPE III PANTOTHENATE KINASE"/>
    <property type="match status" value="1"/>
</dbReference>
<dbReference type="PANTHER" id="PTHR34265:SF1">
    <property type="entry name" value="TYPE III PANTOTHENATE KINASE"/>
    <property type="match status" value="1"/>
</dbReference>
<dbReference type="Pfam" id="PF03309">
    <property type="entry name" value="Pan_kinase"/>
    <property type="match status" value="1"/>
</dbReference>
<dbReference type="SUPFAM" id="SSF53067">
    <property type="entry name" value="Actin-like ATPase domain"/>
    <property type="match status" value="2"/>
</dbReference>
<organism>
    <name type="scientific">Clostridium botulinum (strain 657 / Type Ba4)</name>
    <dbReference type="NCBI Taxonomy" id="515621"/>
    <lineage>
        <taxon>Bacteria</taxon>
        <taxon>Bacillati</taxon>
        <taxon>Bacillota</taxon>
        <taxon>Clostridia</taxon>
        <taxon>Eubacteriales</taxon>
        <taxon>Clostridiaceae</taxon>
        <taxon>Clostridium</taxon>
    </lineage>
</organism>
<comment type="function">
    <text evidence="1">Catalyzes the phosphorylation of pantothenate (Pan), the first step in CoA biosynthesis.</text>
</comment>
<comment type="catalytic activity">
    <reaction evidence="1">
        <text>(R)-pantothenate + ATP = (R)-4'-phosphopantothenate + ADP + H(+)</text>
        <dbReference type="Rhea" id="RHEA:16373"/>
        <dbReference type="ChEBI" id="CHEBI:10986"/>
        <dbReference type="ChEBI" id="CHEBI:15378"/>
        <dbReference type="ChEBI" id="CHEBI:29032"/>
        <dbReference type="ChEBI" id="CHEBI:30616"/>
        <dbReference type="ChEBI" id="CHEBI:456216"/>
        <dbReference type="EC" id="2.7.1.33"/>
    </reaction>
</comment>
<comment type="cofactor">
    <cofactor evidence="1">
        <name>NH4(+)</name>
        <dbReference type="ChEBI" id="CHEBI:28938"/>
    </cofactor>
    <cofactor evidence="1">
        <name>K(+)</name>
        <dbReference type="ChEBI" id="CHEBI:29103"/>
    </cofactor>
    <text evidence="1">A monovalent cation. Ammonium or potassium.</text>
</comment>
<comment type="pathway">
    <text evidence="1">Cofactor biosynthesis; coenzyme A biosynthesis; CoA from (R)-pantothenate: step 1/5.</text>
</comment>
<comment type="subunit">
    <text evidence="1">Homodimer.</text>
</comment>
<comment type="subcellular location">
    <subcellularLocation>
        <location evidence="1">Cytoplasm</location>
    </subcellularLocation>
</comment>
<comment type="similarity">
    <text evidence="1">Belongs to the type III pantothenate kinase family.</text>
</comment>
<accession>C3KVU3</accession>
<name>COAX_CLOB6</name>
<proteinExistence type="inferred from homology"/>
<feature type="chain" id="PRO_1000214184" description="Type III pantothenate kinase">
    <location>
        <begin position="1"/>
        <end position="258"/>
    </location>
</feature>
<feature type="active site" description="Proton acceptor" evidence="1">
    <location>
        <position position="109"/>
    </location>
</feature>
<feature type="binding site" evidence="1">
    <location>
        <begin position="6"/>
        <end position="13"/>
    </location>
    <ligand>
        <name>ATP</name>
        <dbReference type="ChEBI" id="CHEBI:30616"/>
    </ligand>
</feature>
<feature type="binding site" evidence="1">
    <location>
        <position position="100"/>
    </location>
    <ligand>
        <name>substrate</name>
    </ligand>
</feature>
<feature type="binding site" evidence="1">
    <location>
        <begin position="107"/>
        <end position="110"/>
    </location>
    <ligand>
        <name>substrate</name>
    </ligand>
</feature>
<feature type="binding site" evidence="1">
    <location>
        <position position="129"/>
    </location>
    <ligand>
        <name>K(+)</name>
        <dbReference type="ChEBI" id="CHEBI:29103"/>
    </ligand>
</feature>
<feature type="binding site" evidence="1">
    <location>
        <position position="132"/>
    </location>
    <ligand>
        <name>ATP</name>
        <dbReference type="ChEBI" id="CHEBI:30616"/>
    </ligand>
</feature>
<feature type="binding site" evidence="1">
    <location>
        <position position="184"/>
    </location>
    <ligand>
        <name>substrate</name>
    </ligand>
</feature>
<keyword id="KW-0067">ATP-binding</keyword>
<keyword id="KW-0173">Coenzyme A biosynthesis</keyword>
<keyword id="KW-0963">Cytoplasm</keyword>
<keyword id="KW-0418">Kinase</keyword>
<keyword id="KW-0479">Metal-binding</keyword>
<keyword id="KW-0547">Nucleotide-binding</keyword>
<keyword id="KW-0630">Potassium</keyword>
<keyword id="KW-0808">Transferase</keyword>
<gene>
    <name evidence="1" type="primary">coaX</name>
    <name type="ordered locus">CLJ_B3846</name>
</gene>